<sequence>WIMGHMVNAIAQIDEFVNLGANSIETDVSFDKNANPEYTYHGIPCDCGRTCTKWEYFNTFLGGLRKATTPGDSKYHEKLVLVVFDLKTGSLYDNQAYDAGTKLAKSLLQNYWNKGNNGGRAYIVLSIPNLDHYKLITGFKETLTKEEHPELMDKVGYDFSGNDDIGDVAKAYKKAGVTGHVWQSDGITNCLLRGLDRVRKAVANRDSSNGYINKVYYWTVDKRASTRDALDAGVDGIMTNYPDVIADVLSESAYTAKFRIATYDDNPWEMFKN</sequence>
<protein>
    <recommendedName>
        <fullName evidence="6">Dermonecrotic toxin LsaSicTox-alphaIB1aiii</fullName>
        <ecNumber evidence="4">4.6.1.-</ecNumber>
    </recommendedName>
    <alternativeName>
        <fullName>Phospholipase D</fullName>
        <shortName>PLD</shortName>
    </alternativeName>
    <alternativeName>
        <fullName>Sphingomyelin phosphodiesterase D</fullName>
        <shortName>SMD</shortName>
        <shortName>SMase D</shortName>
        <shortName>Sphingomyelinase D</shortName>
    </alternativeName>
</protein>
<dbReference type="EC" id="4.6.1.-" evidence="4"/>
<dbReference type="EMBL" id="FJ171420">
    <property type="protein sequence ID" value="ACN48916.1"/>
    <property type="molecule type" value="mRNA"/>
</dbReference>
<dbReference type="SMR" id="C0JAY5"/>
<dbReference type="GO" id="GO:0005576">
    <property type="term" value="C:extracellular region"/>
    <property type="evidence" value="ECO:0007669"/>
    <property type="project" value="UniProtKB-SubCell"/>
</dbReference>
<dbReference type="GO" id="GO:0016829">
    <property type="term" value="F:lyase activity"/>
    <property type="evidence" value="ECO:0007669"/>
    <property type="project" value="UniProtKB-KW"/>
</dbReference>
<dbReference type="GO" id="GO:0046872">
    <property type="term" value="F:metal ion binding"/>
    <property type="evidence" value="ECO:0007669"/>
    <property type="project" value="UniProtKB-KW"/>
</dbReference>
<dbReference type="GO" id="GO:0008081">
    <property type="term" value="F:phosphoric diester hydrolase activity"/>
    <property type="evidence" value="ECO:0007669"/>
    <property type="project" value="InterPro"/>
</dbReference>
<dbReference type="GO" id="GO:0090729">
    <property type="term" value="F:toxin activity"/>
    <property type="evidence" value="ECO:0007669"/>
    <property type="project" value="UniProtKB-KW"/>
</dbReference>
<dbReference type="GO" id="GO:0031640">
    <property type="term" value="P:killing of cells of another organism"/>
    <property type="evidence" value="ECO:0007669"/>
    <property type="project" value="UniProtKB-KW"/>
</dbReference>
<dbReference type="GO" id="GO:0016042">
    <property type="term" value="P:lipid catabolic process"/>
    <property type="evidence" value="ECO:0007669"/>
    <property type="project" value="UniProtKB-KW"/>
</dbReference>
<dbReference type="CDD" id="cd08576">
    <property type="entry name" value="GDPD_like_SMaseD_PLD"/>
    <property type="match status" value="1"/>
</dbReference>
<dbReference type="Gene3D" id="3.20.20.190">
    <property type="entry name" value="Phosphatidylinositol (PI) phosphodiesterase"/>
    <property type="match status" value="1"/>
</dbReference>
<dbReference type="InterPro" id="IPR017946">
    <property type="entry name" value="PLC-like_Pdiesterase_TIM-brl"/>
</dbReference>
<dbReference type="Pfam" id="PF13653">
    <property type="entry name" value="GDPD_2"/>
    <property type="match status" value="1"/>
</dbReference>
<dbReference type="SUPFAM" id="SSF51695">
    <property type="entry name" value="PLC-like phosphodiesterases"/>
    <property type="match status" value="1"/>
</dbReference>
<proteinExistence type="evidence at transcript level"/>
<keyword id="KW-0204">Cytolysis</keyword>
<keyword id="KW-1061">Dermonecrotic toxin</keyword>
<keyword id="KW-1015">Disulfide bond</keyword>
<keyword id="KW-0354">Hemolysis</keyword>
<keyword id="KW-0442">Lipid degradation</keyword>
<keyword id="KW-0443">Lipid metabolism</keyword>
<keyword id="KW-0456">Lyase</keyword>
<keyword id="KW-0460">Magnesium</keyword>
<keyword id="KW-0479">Metal-binding</keyword>
<keyword id="KW-0964">Secreted</keyword>
<keyword id="KW-0800">Toxin</keyword>
<reference key="1">
    <citation type="journal article" date="2009" name="Mol. Biol. Evol.">
        <title>Molecular evolution, functional variation, and proposed nomenclature of the gene family that includes sphingomyelinase D in sicariid spider venoms.</title>
        <authorList>
            <person name="Binford G.J."/>
            <person name="Bodner M.R."/>
            <person name="Cordes M.H."/>
            <person name="Baldwin K.L."/>
            <person name="Rynerson M.R."/>
            <person name="Burns S.N."/>
            <person name="Zobel-Thropp P.A."/>
        </authorList>
    </citation>
    <scope>NUCLEOTIDE SEQUENCE [MRNA]</scope>
    <scope>NOMENCLATURE</scope>
    <source>
        <tissue>Venom gland</tissue>
    </source>
</reference>
<evidence type="ECO:0000250" key="1">
    <source>
        <dbReference type="UniProtKB" id="A0A0D4WTV1"/>
    </source>
</evidence>
<evidence type="ECO:0000250" key="2">
    <source>
        <dbReference type="UniProtKB" id="A0A0D4WV12"/>
    </source>
</evidence>
<evidence type="ECO:0000250" key="3">
    <source>
        <dbReference type="UniProtKB" id="P0CE80"/>
    </source>
</evidence>
<evidence type="ECO:0000250" key="4">
    <source>
        <dbReference type="UniProtKB" id="Q4ZFU2"/>
    </source>
</evidence>
<evidence type="ECO:0000250" key="5">
    <source>
        <dbReference type="UniProtKB" id="Q8I914"/>
    </source>
</evidence>
<evidence type="ECO:0000303" key="6">
    <source>
    </source>
</evidence>
<evidence type="ECO:0000305" key="7"/>
<evidence type="ECO:0000305" key="8">
    <source>
    </source>
</evidence>
<name>A1KA3_LOXSA</name>
<comment type="function">
    <text evidence="1 3">Dermonecrotic toxins cleave the phosphodiester linkage between the phosphate and headgroup of certain phospholipids (sphingolipid and lysolipid substrates), forming an alcohol (often choline) and a cyclic phosphate (By similarity). This toxin acts on sphingomyelin (SM) (By similarity). It may also act on ceramide phosphoethanolamine (CPE), lysophosphatidylcholine (LPC) and lysophosphatidylethanolamine (LPE), but not on lysophosphatidylserine (LPS), and lysophosphatidylglycerol (LPG) (By similarity). It acts by transphosphatidylation, releasing exclusively cyclic phosphate products as second products (By similarity). Induces dermonecrosis, hemolysis, increased vascular permeability, edema, inflammatory response, and platelet aggregation (By similarity).</text>
</comment>
<comment type="catalytic activity">
    <reaction evidence="1">
        <text>an N-(acyl)-sphingosylphosphocholine = an N-(acyl)-sphingosyl-1,3-cyclic phosphate + choline</text>
        <dbReference type="Rhea" id="RHEA:60652"/>
        <dbReference type="ChEBI" id="CHEBI:15354"/>
        <dbReference type="ChEBI" id="CHEBI:64583"/>
        <dbReference type="ChEBI" id="CHEBI:143892"/>
    </reaction>
</comment>
<comment type="catalytic activity">
    <reaction evidence="1">
        <text>an N-(acyl)-sphingosylphosphoethanolamine = an N-(acyl)-sphingosyl-1,3-cyclic phosphate + ethanolamine</text>
        <dbReference type="Rhea" id="RHEA:60648"/>
        <dbReference type="ChEBI" id="CHEBI:57603"/>
        <dbReference type="ChEBI" id="CHEBI:143891"/>
        <dbReference type="ChEBI" id="CHEBI:143892"/>
    </reaction>
</comment>
<comment type="catalytic activity">
    <reaction evidence="1">
        <text>a 1-acyl-sn-glycero-3-phosphocholine = a 1-acyl-sn-glycero-2,3-cyclic phosphate + choline</text>
        <dbReference type="Rhea" id="RHEA:60700"/>
        <dbReference type="ChEBI" id="CHEBI:15354"/>
        <dbReference type="ChEBI" id="CHEBI:58168"/>
        <dbReference type="ChEBI" id="CHEBI:143947"/>
    </reaction>
</comment>
<comment type="catalytic activity">
    <reaction evidence="1">
        <text>a 1-acyl-sn-glycero-3-phosphoethanolamine = a 1-acyl-sn-glycero-2,3-cyclic phosphate + ethanolamine</text>
        <dbReference type="Rhea" id="RHEA:60704"/>
        <dbReference type="ChEBI" id="CHEBI:57603"/>
        <dbReference type="ChEBI" id="CHEBI:64381"/>
        <dbReference type="ChEBI" id="CHEBI:143947"/>
    </reaction>
</comment>
<comment type="cofactor">
    <cofactor evidence="5">
        <name>Mg(2+)</name>
        <dbReference type="ChEBI" id="CHEBI:18420"/>
    </cofactor>
    <text evidence="5">Binds 1 Mg(2+) ion per subunit.</text>
</comment>
<comment type="subcellular location">
    <subcellularLocation>
        <location evidence="8">Secreted</location>
    </subcellularLocation>
</comment>
<comment type="tissue specificity">
    <text evidence="8">Expressed by the venom gland.</text>
</comment>
<comment type="similarity">
    <text evidence="7">Belongs to the arthropod phospholipase D family. Class II subfamily.</text>
</comment>
<comment type="caution">
    <text evidence="1 2 4">The most common activity assay for dermonecrotic toxins detects enzymatic activity by monitoring choline release from substrate. Liberation of choline from sphingomyelin (SM) or lysophosphatidylcholine (LPC) is commonly assumed to result from substrate hydrolysis, giving either ceramide-1-phosphate (C1P) or lysophosphatidic acid (LPA), respectively, as a second product. However, two studies from Lajoie and colleagues (2013 and 2015) report the observation of exclusive formation of cyclic phosphate products as second products, resulting from intramolecular transphosphatidylation. Cyclic phosphates have vastly different biological properties from their monoester counterparts, and they may be relevant to the pathology of brown spider envenomation.</text>
</comment>
<accession>C0JAY5</accession>
<feature type="chain" id="PRO_0000392773" description="Dermonecrotic toxin LsaSicTox-alphaIB1aiii">
    <location>
        <begin position="1" status="less than"/>
        <end position="273"/>
    </location>
</feature>
<feature type="active site" evidence="5">
    <location>
        <position position="5"/>
    </location>
</feature>
<feature type="active site" description="Nucleophile" evidence="5">
    <location>
        <position position="41"/>
    </location>
</feature>
<feature type="binding site" evidence="5">
    <location>
        <position position="25"/>
    </location>
    <ligand>
        <name>Mg(2+)</name>
        <dbReference type="ChEBI" id="CHEBI:18420"/>
    </ligand>
</feature>
<feature type="binding site" evidence="5">
    <location>
        <position position="27"/>
    </location>
    <ligand>
        <name>Mg(2+)</name>
        <dbReference type="ChEBI" id="CHEBI:18420"/>
    </ligand>
</feature>
<feature type="binding site" evidence="5">
    <location>
        <position position="85"/>
    </location>
    <ligand>
        <name>Mg(2+)</name>
        <dbReference type="ChEBI" id="CHEBI:18420"/>
    </ligand>
</feature>
<feature type="disulfide bond" evidence="3">
    <location>
        <begin position="45"/>
        <end position="51"/>
    </location>
</feature>
<feature type="disulfide bond" evidence="3">
    <location>
        <begin position="47"/>
        <end position="190"/>
    </location>
</feature>
<feature type="non-terminal residue">
    <location>
        <position position="1"/>
    </location>
</feature>
<organism>
    <name type="scientific">Loxosceles sabina</name>
    <name type="common">Tucson recluse spider</name>
    <dbReference type="NCBI Taxonomy" id="571529"/>
    <lineage>
        <taxon>Eukaryota</taxon>
        <taxon>Metazoa</taxon>
        <taxon>Ecdysozoa</taxon>
        <taxon>Arthropoda</taxon>
        <taxon>Chelicerata</taxon>
        <taxon>Arachnida</taxon>
        <taxon>Araneae</taxon>
        <taxon>Araneomorphae</taxon>
        <taxon>Haplogynae</taxon>
        <taxon>Scytodoidea</taxon>
        <taxon>Sicariidae</taxon>
        <taxon>Loxosceles</taxon>
    </lineage>
</organism>